<sequence length="553" mass="60707">MDEKKLFLTALKKKFEVEDPDEKYTNFYCFGGWEQSARKKEFTEYAKKAAEKRGGIPFYNPDIGVPLGQRKLMAYRVSGTDAYVEGDDLHFVNNAAIQQMVDDIKRTVIVGMDTAHAVLEKRLGVEVTPETINEYMEAINHALPGGAVVQEHMVEVHPGLVEDCYAKIFTGDDNLADELDKRILIDINKEFPEEQAEQLKSYIGNRTYQVNRVPTIVVRTCDGGTVSRWSAMQIGMSFISAYKLCAGEAAIADFSYAAKHADVIEMGTIMPARRARGPNEPGGVAFGTFADIVQASRVSDDPAKISLEVIAGAAALYDQVWLGSYMSGGVGFTQYATAAYTDDILDDFVYYGMEYVDDKYGICGTKPTMDVVRDISTEVTLYSLEQYEEYPTLLEDHFGGSQRAAVAAAAAGCSTAFATGNSNAGINGWYLSQILHKEAHSRLGFYGYDLQDQCGASNSLSIRSDEGLIHELRGPNYPNYAMNVGHQPEYAGIAQAPHAARGDAFCTNPLIKVAFADKDLSFDFTSPRKSIAAGALREFMPEGERDLIIPAGK</sequence>
<accession>P21110</accession>
<accession>O27201</accession>
<accession>Q50487</accession>
<proteinExistence type="evidence at protein level"/>
<evidence type="ECO:0000250" key="1">
    <source>
        <dbReference type="UniProtKB" id="P11558"/>
    </source>
</evidence>
<evidence type="ECO:0000250" key="2">
    <source>
        <dbReference type="UniProtKB" id="P58815"/>
    </source>
</evidence>
<evidence type="ECO:0000250" key="3">
    <source>
        <dbReference type="UniProtKB" id="Q8THH1"/>
    </source>
</evidence>
<evidence type="ECO:0000269" key="4">
    <source>
    </source>
</evidence>
<evidence type="ECO:0000303" key="5">
    <source>
    </source>
</evidence>
<evidence type="ECO:0000305" key="6"/>
<evidence type="ECO:0000305" key="7">
    <source>
    </source>
</evidence>
<feature type="chain" id="PRO_0000147457" description="Methyl-coenzyme M reductase II subunit alpha">
    <location>
        <begin position="1"/>
        <end position="553"/>
    </location>
</feature>
<feature type="binding site" description="axial binding residue" evidence="2">
    <location>
        <position position="150"/>
    </location>
    <ligand>
        <name>coenzyme F430</name>
        <dbReference type="ChEBI" id="CHEBI:60540"/>
    </ligand>
    <ligandPart>
        <name>Ni</name>
        <dbReference type="ChEBI" id="CHEBI:28112"/>
    </ligandPart>
</feature>
<feature type="binding site" description="in chain A" evidence="2">
    <location>
        <position position="228"/>
    </location>
    <ligand>
        <name>coenzyme B</name>
        <dbReference type="ChEBI" id="CHEBI:58596"/>
        <note>ligand shared between two alpha subunits</note>
    </ligand>
</feature>
<feature type="binding site" description="in chain A" evidence="2">
    <location>
        <begin position="259"/>
        <end position="260"/>
    </location>
    <ligand>
        <name>coenzyme B</name>
        <dbReference type="ChEBI" id="CHEBI:58596"/>
        <note>ligand shared between two alpha subunits</note>
    </ligand>
</feature>
<feature type="binding site" description="in chain B" evidence="2">
    <location>
        <position position="273"/>
    </location>
    <ligand>
        <name>coenzyme B</name>
        <dbReference type="ChEBI" id="CHEBI:58596"/>
        <note>ligand shared between two alpha subunits</note>
    </ligand>
</feature>
<feature type="binding site" evidence="2">
    <location>
        <position position="335"/>
    </location>
    <ligand>
        <name>coenzyme M</name>
        <dbReference type="ChEBI" id="CHEBI:58319"/>
    </ligand>
</feature>
<feature type="binding site" evidence="2">
    <location>
        <position position="446"/>
    </location>
    <ligand>
        <name>coenzyme M</name>
        <dbReference type="ChEBI" id="CHEBI:58319"/>
    </ligand>
</feature>
<feature type="modified residue" description="Pros-methylhistidine" evidence="2">
    <location>
        <position position="260"/>
    </location>
</feature>
<feature type="modified residue" description="5-methylarginine" evidence="2">
    <location>
        <position position="274"/>
    </location>
</feature>
<feature type="modified residue" description="2-methylglutamine" evidence="2">
    <location>
        <position position="402"/>
    </location>
</feature>
<feature type="modified residue" description="1-thioglycine" evidence="2">
    <location>
        <position position="447"/>
    </location>
</feature>
<feature type="modified residue" description="(Z)-2,3-didehydroaspartate" evidence="2">
    <location>
        <position position="452"/>
    </location>
</feature>
<feature type="modified residue" description="S-methylcysteine" evidence="2">
    <location>
        <position position="454"/>
    </location>
</feature>
<feature type="sequence conflict" description="In Ref. 1; AAA73439." evidence="6" ref="1">
    <original>L</original>
    <variation>H</variation>
    <location>
        <position position="6"/>
    </location>
</feature>
<feature type="sequence conflict" description="In Ref. 1; AAA73439." evidence="6" ref="1">
    <original>Y</original>
    <variation>I</variation>
    <location>
        <position position="24"/>
    </location>
</feature>
<feature type="sequence conflict" description="In Ref. 1; AAA73439." evidence="6" ref="1">
    <original>I</original>
    <variation>V</variation>
    <location>
        <position position="168"/>
    </location>
</feature>
<feature type="sequence conflict" description="In Ref. 1." evidence="6" ref="1">
    <original>K</original>
    <variation>KEQLK</variation>
    <location>
        <position position="200"/>
    </location>
</feature>
<keyword id="KW-0903">Direct protein sequencing</keyword>
<keyword id="KW-0479">Metal-binding</keyword>
<keyword id="KW-0484">Methanogenesis</keyword>
<keyword id="KW-0488">Methylation</keyword>
<keyword id="KW-0533">Nickel</keyword>
<keyword id="KW-1185">Reference proteome</keyword>
<keyword id="KW-0808">Transferase</keyword>
<comment type="function">
    <text evidence="4">Component of the methyl-coenzyme M reductase (MCR) I that catalyzes the reductive cleavage of methyl-coenzyme M (CoM-S-CH3 or 2-(methylthio)ethanesulfonate) using coenzyme B (CoB or 7-mercaptoheptanoylthreonine phosphate) as reductant which results in the production of methane and the mixed heterodisulfide of CoB and CoM (CoM-S-S-CoB). This is the final step in methanogenesis.</text>
</comment>
<comment type="catalytic activity">
    <reaction evidence="4">
        <text>coenzyme B + methyl-coenzyme M = methane + coenzyme M-coenzyme B heterodisulfide</text>
        <dbReference type="Rhea" id="RHEA:12532"/>
        <dbReference type="ChEBI" id="CHEBI:16183"/>
        <dbReference type="ChEBI" id="CHEBI:58286"/>
        <dbReference type="ChEBI" id="CHEBI:58411"/>
        <dbReference type="ChEBI" id="CHEBI:58596"/>
        <dbReference type="EC" id="2.8.4.1"/>
    </reaction>
    <physiologicalReaction direction="left-to-right" evidence="7">
        <dbReference type="Rhea" id="RHEA:12533"/>
    </physiologicalReaction>
</comment>
<comment type="cofactor">
    <cofactor evidence="1">
        <name>coenzyme F430</name>
        <dbReference type="ChEBI" id="CHEBI:60540"/>
    </cofactor>
    <text evidence="1">Binds 2 coenzyme F430 non-covalently per MCR complex. Coenzyme F430 is a yellow nickel porphinoid. Methyl-coenzyme-M reductase is activated when the enzyme-bound coenzyme F430 is reduced to the Ni(I) oxidation state.</text>
</comment>
<comment type="pathway">
    <text evidence="7">One-carbon metabolism; methyl-coenzyme M reduction; methane from methyl-coenzyme M: step 1/1.</text>
</comment>
<comment type="subunit">
    <text evidence="4">MCR is a hexamer of two alpha, two beta, and two gamma chains, forming a dimer of heterotrimers.</text>
</comment>
<comment type="developmental stage">
    <text evidence="1">There are two MCR complexes in this bacteria. MCR II is expressed in the early growth phase. Late growth cells contain mostly MCR I.</text>
</comment>
<comment type="PTM">
    <text evidence="2 3">The alpha subunit contains six modified amino acids near the active site region. Is methylated on His-260, Arg-274, Gln-402 and Cys-454, probably by the action of specific S-adenosylmethionine-dependent methyltransferases. Also contains a thioglycine at position 447, forming a thiopeptide bond. Contains a didehydroaspartate residue at position 452 (By similarity). The methylation on C5 of Arg-274 is a post-translational methylation not essential in vivo, but which plays a role for the stability and structural integrity of MCR (By similarity).</text>
</comment>
<comment type="similarity">
    <text evidence="6">Belongs to the methyl-coenzyme M reductase alpha subunit family.</text>
</comment>
<protein>
    <recommendedName>
        <fullName evidence="5">Methyl-coenzyme M reductase II subunit alpha</fullName>
        <shortName evidence="5">MCR II alpha</shortName>
        <ecNumber evidence="4">2.8.4.1</ecNumber>
    </recommendedName>
    <alternativeName>
        <fullName>Coenzyme-B sulfoethylthiotransferase alpha</fullName>
    </alternativeName>
</protein>
<gene>
    <name type="primary">mrtA</name>
    <name type="ordered locus">MTH_1129</name>
</gene>
<organism>
    <name type="scientific">Methanothermobacter thermautotrophicus (strain ATCC 29096 / DSM 1053 / JCM 10044 / NBRC 100330 / Delta H)</name>
    <name type="common">Methanobacterium thermoautotrophicum</name>
    <dbReference type="NCBI Taxonomy" id="187420"/>
    <lineage>
        <taxon>Archaea</taxon>
        <taxon>Methanobacteriati</taxon>
        <taxon>Methanobacteriota</taxon>
        <taxon>Methanomada group</taxon>
        <taxon>Methanobacteria</taxon>
        <taxon>Methanobacteriales</taxon>
        <taxon>Methanobacteriaceae</taxon>
        <taxon>Methanothermobacter</taxon>
    </lineage>
</organism>
<reference key="1">
    <citation type="journal article" date="1994" name="J. Bacteriol.">
        <title>Growth phase-dependent transcription of the genes that encode the two methyl coenzyme M reductase isoenzymes and N5-methyltetrahydromethanopterin:coenzyme M methyltransferase in Methanobacterium thermoautotrophicum delta H.</title>
        <authorList>
            <person name="Pihl T.D."/>
            <person name="Sharma S."/>
            <person name="Reeve J.N."/>
        </authorList>
    </citation>
    <scope>NUCLEOTIDE SEQUENCE [GENOMIC DNA]</scope>
    <source>
        <strain>ATCC 29096 / DSM 1053 / JCM 10044 / NBRC 100330 / Delta H</strain>
    </source>
</reference>
<reference key="2">
    <citation type="journal article" date="1997" name="J. Bacteriol.">
        <title>Complete genome sequence of Methanobacterium thermoautotrophicum deltaH: functional analysis and comparative genomics.</title>
        <authorList>
            <person name="Smith D.R."/>
            <person name="Doucette-Stamm L.A."/>
            <person name="Deloughery C."/>
            <person name="Lee H.-M."/>
            <person name="Dubois J."/>
            <person name="Aldredge T."/>
            <person name="Bashirzadeh R."/>
            <person name="Blakely D."/>
            <person name="Cook R."/>
            <person name="Gilbert K."/>
            <person name="Harrison D."/>
            <person name="Hoang L."/>
            <person name="Keagle P."/>
            <person name="Lumm W."/>
            <person name="Pothier B."/>
            <person name="Qiu D."/>
            <person name="Spadafora R."/>
            <person name="Vicare R."/>
            <person name="Wang Y."/>
            <person name="Wierzbowski J."/>
            <person name="Gibson R."/>
            <person name="Jiwani N."/>
            <person name="Caruso A."/>
            <person name="Bush D."/>
            <person name="Safer H."/>
            <person name="Patwell D."/>
            <person name="Prabhakar S."/>
            <person name="McDougall S."/>
            <person name="Shimer G."/>
            <person name="Goyal A."/>
            <person name="Pietrovski S."/>
            <person name="Church G.M."/>
            <person name="Daniels C.J."/>
            <person name="Mao J.-I."/>
            <person name="Rice P."/>
            <person name="Noelling J."/>
            <person name="Reeve J.N."/>
        </authorList>
    </citation>
    <scope>NUCLEOTIDE SEQUENCE [LARGE SCALE GENOMIC DNA]</scope>
    <source>
        <strain>ATCC 29096 / DSM 1053 / JCM 10044 / NBRC 100330 / Delta H</strain>
    </source>
</reference>
<reference key="3">
    <citation type="journal article" date="1990" name="Eur. J. Biochem.">
        <title>Two genetically distinct methyl-coenzyme M reductases in Methanobacterium thermoautotrophicum strain Marburg and delta H.</title>
        <authorList>
            <person name="Rospert S."/>
            <person name="Linder D."/>
            <person name="Ellermann J."/>
            <person name="Thauer R.K."/>
        </authorList>
    </citation>
    <scope>PROTEIN SEQUENCE OF 1-15</scope>
    <scope>FUNCTION</scope>
    <scope>CATALYTIC ACTIVITY</scope>
    <scope>SUBUNIT</scope>
    <source>
        <strain>ATCC 29096 / DSM 1053 / JCM 10044 / NBRC 100330 / Delta H</strain>
    </source>
</reference>
<dbReference type="EC" id="2.8.4.1" evidence="4"/>
<dbReference type="EMBL" id="U09990">
    <property type="protein sequence ID" value="AAA73439.1"/>
    <property type="molecule type" value="Genomic_DNA"/>
</dbReference>
<dbReference type="EMBL" id="AE000666">
    <property type="protein sequence ID" value="AAB85618.1"/>
    <property type="molecule type" value="Genomic_DNA"/>
</dbReference>
<dbReference type="PIR" id="C69017">
    <property type="entry name" value="C69017"/>
</dbReference>
<dbReference type="PIR" id="T45150">
    <property type="entry name" value="T45150"/>
</dbReference>
<dbReference type="RefSeq" id="WP_010876753.1">
    <property type="nucleotide sequence ID" value="NC_000916.1"/>
</dbReference>
<dbReference type="SMR" id="P21110"/>
<dbReference type="FunCoup" id="P21110">
    <property type="interactions" value="70"/>
</dbReference>
<dbReference type="IntAct" id="P21110">
    <property type="interactions" value="2"/>
</dbReference>
<dbReference type="STRING" id="187420.MTH_1129"/>
<dbReference type="PaxDb" id="187420-MTH_1129"/>
<dbReference type="EnsemblBacteria" id="AAB85618">
    <property type="protein sequence ID" value="AAB85618"/>
    <property type="gene ID" value="MTH_1129"/>
</dbReference>
<dbReference type="GeneID" id="1471537"/>
<dbReference type="KEGG" id="mth:MTH_1129"/>
<dbReference type="PATRIC" id="fig|187420.15.peg.1106"/>
<dbReference type="HOGENOM" id="CLU_493170_0_0_2"/>
<dbReference type="InParanoid" id="P21110"/>
<dbReference type="BioCyc" id="MetaCyc:MRTAMAUTO-MONOMER"/>
<dbReference type="UniPathway" id="UPA00646">
    <property type="reaction ID" value="UER00699"/>
</dbReference>
<dbReference type="Proteomes" id="UP000005223">
    <property type="component" value="Chromosome"/>
</dbReference>
<dbReference type="GO" id="GO:0050524">
    <property type="term" value="F:coenzyme-B sulfoethylthiotransferase activity"/>
    <property type="evidence" value="ECO:0007669"/>
    <property type="project" value="UniProtKB-EC"/>
</dbReference>
<dbReference type="GO" id="GO:0046872">
    <property type="term" value="F:metal ion binding"/>
    <property type="evidence" value="ECO:0007669"/>
    <property type="project" value="UniProtKB-KW"/>
</dbReference>
<dbReference type="GO" id="GO:0015948">
    <property type="term" value="P:methanogenesis"/>
    <property type="evidence" value="ECO:0007669"/>
    <property type="project" value="UniProtKB-KW"/>
</dbReference>
<dbReference type="Gene3D" id="3.30.70.470">
    <property type="match status" value="1"/>
</dbReference>
<dbReference type="Gene3D" id="1.20.840.10">
    <property type="entry name" value="Methyl-coenzyme M reductase, alpha/beta subunit, C-terminal"/>
    <property type="match status" value="1"/>
</dbReference>
<dbReference type="Gene3D" id="3.90.390.10">
    <property type="entry name" value="Methyl-coenzyme M Reductase, Chain A, domain 1"/>
    <property type="match status" value="1"/>
</dbReference>
<dbReference type="InterPro" id="IPR016212">
    <property type="entry name" value="Me_CoM_Rdtase_asu"/>
</dbReference>
<dbReference type="InterPro" id="IPR008924">
    <property type="entry name" value="Me_CoM_Rdtase_asu/bsu_C"/>
</dbReference>
<dbReference type="InterPro" id="IPR009047">
    <property type="entry name" value="Me_CoM_Rdtase_asu_C"/>
</dbReference>
<dbReference type="InterPro" id="IPR003183">
    <property type="entry name" value="Me_CoM_Rdtase_asu_N"/>
</dbReference>
<dbReference type="InterPro" id="IPR015811">
    <property type="entry name" value="Me_CoM_Rdtase_asu_N_sub1"/>
</dbReference>
<dbReference type="InterPro" id="IPR015823">
    <property type="entry name" value="Me_CoM_Rdtase_asu_N_sub2"/>
</dbReference>
<dbReference type="InterPro" id="IPR009024">
    <property type="entry name" value="Me_CoM_Rdtase_Fd-like_fold"/>
</dbReference>
<dbReference type="NCBIfam" id="TIGR03256">
    <property type="entry name" value="met_CoM_red_alp"/>
    <property type="match status" value="1"/>
</dbReference>
<dbReference type="Pfam" id="PF02249">
    <property type="entry name" value="MCR_alpha"/>
    <property type="match status" value="1"/>
</dbReference>
<dbReference type="Pfam" id="PF02745">
    <property type="entry name" value="MCR_alpha_N"/>
    <property type="match status" value="1"/>
</dbReference>
<dbReference type="PIRSF" id="PIRSF000262">
    <property type="entry name" value="MCR_alpha"/>
    <property type="match status" value="1"/>
</dbReference>
<dbReference type="SUPFAM" id="SSF48081">
    <property type="entry name" value="Methyl-coenzyme M reductase alpha and beta chain C-terminal domain"/>
    <property type="match status" value="1"/>
</dbReference>
<dbReference type="SUPFAM" id="SSF55088">
    <property type="entry name" value="Methyl-coenzyme M reductase subunits"/>
    <property type="match status" value="1"/>
</dbReference>
<name>MCRX_METTH</name>